<accession>P30269</accession>
<protein>
    <recommendedName>
        <fullName>Alpha-amylase</fullName>
        <ecNumber>3.2.1.1</ecNumber>
    </recommendedName>
    <alternativeName>
        <fullName>1,4-alpha-D-glucan glucanohydrolase</fullName>
    </alternativeName>
</protein>
<dbReference type="EC" id="3.2.1.1"/>
<dbReference type="EMBL" id="M62507">
    <property type="protein sequence ID" value="AAA23005.1"/>
    <property type="molecule type" value="Genomic_DNA"/>
</dbReference>
<dbReference type="PIR" id="A42466">
    <property type="entry name" value="A42466"/>
</dbReference>
<dbReference type="SMR" id="P30269"/>
<dbReference type="CAZy" id="CBM26">
    <property type="family name" value="Carbohydrate-Binding Module Family 26"/>
</dbReference>
<dbReference type="CAZy" id="GH13">
    <property type="family name" value="Glycoside Hydrolase Family 13"/>
</dbReference>
<dbReference type="GO" id="GO:0004556">
    <property type="term" value="F:alpha-amylase activity"/>
    <property type="evidence" value="ECO:0007669"/>
    <property type="project" value="UniProtKB-EC"/>
</dbReference>
<dbReference type="GO" id="GO:0046872">
    <property type="term" value="F:metal ion binding"/>
    <property type="evidence" value="ECO:0007669"/>
    <property type="project" value="UniProtKB-KW"/>
</dbReference>
<dbReference type="GO" id="GO:0005975">
    <property type="term" value="P:carbohydrate metabolic process"/>
    <property type="evidence" value="ECO:0007669"/>
    <property type="project" value="InterPro"/>
</dbReference>
<dbReference type="CDD" id="cd11315">
    <property type="entry name" value="AmyAc_bac1_AmyA"/>
    <property type="match status" value="1"/>
</dbReference>
<dbReference type="Gene3D" id="3.20.20.80">
    <property type="entry name" value="Glycosidases"/>
    <property type="match status" value="1"/>
</dbReference>
<dbReference type="Gene3D" id="2.60.40.1180">
    <property type="entry name" value="Golgi alpha-mannosidase II"/>
    <property type="match status" value="1"/>
</dbReference>
<dbReference type="Gene3D" id="2.60.40.10">
    <property type="entry name" value="Immunoglobulins"/>
    <property type="match status" value="3"/>
</dbReference>
<dbReference type="InterPro" id="IPR006046">
    <property type="entry name" value="Alpha_amylase"/>
</dbReference>
<dbReference type="InterPro" id="IPR031965">
    <property type="entry name" value="CBM26"/>
</dbReference>
<dbReference type="InterPro" id="IPR006047">
    <property type="entry name" value="Glyco_hydro_13_cat_dom"/>
</dbReference>
<dbReference type="InterPro" id="IPR013780">
    <property type="entry name" value="Glyco_hydro_b"/>
</dbReference>
<dbReference type="InterPro" id="IPR017853">
    <property type="entry name" value="Glycoside_hydrolase_SF"/>
</dbReference>
<dbReference type="InterPro" id="IPR013783">
    <property type="entry name" value="Ig-like_fold"/>
</dbReference>
<dbReference type="PANTHER" id="PTHR43447">
    <property type="entry name" value="ALPHA-AMYLASE"/>
    <property type="match status" value="1"/>
</dbReference>
<dbReference type="Pfam" id="PF00128">
    <property type="entry name" value="Alpha-amylase"/>
    <property type="match status" value="1"/>
</dbReference>
<dbReference type="Pfam" id="PF16738">
    <property type="entry name" value="CBM26"/>
    <property type="match status" value="2"/>
</dbReference>
<dbReference type="PRINTS" id="PR00110">
    <property type="entry name" value="ALPHAAMYLASE"/>
</dbReference>
<dbReference type="SMART" id="SM00642">
    <property type="entry name" value="Aamy"/>
    <property type="match status" value="1"/>
</dbReference>
<dbReference type="SUPFAM" id="SSF51445">
    <property type="entry name" value="(Trans)glycosidases"/>
    <property type="match status" value="1"/>
</dbReference>
<dbReference type="SUPFAM" id="SSF51011">
    <property type="entry name" value="Glycosyl hydrolase domain"/>
    <property type="match status" value="1"/>
</dbReference>
<feature type="signal peptide" evidence="2">
    <location>
        <begin position="1"/>
        <end position="33"/>
    </location>
</feature>
<feature type="chain" id="PRO_0000001337" description="Alpha-amylase">
    <location>
        <begin position="34"/>
        <end position="976"/>
    </location>
</feature>
<feature type="region of interest" description="Disordered" evidence="3">
    <location>
        <begin position="45"/>
        <end position="98"/>
    </location>
</feature>
<feature type="compositionally biased region" description="Low complexity" evidence="3">
    <location>
        <begin position="50"/>
        <end position="60"/>
    </location>
</feature>
<feature type="compositionally biased region" description="Acidic residues" evidence="3">
    <location>
        <begin position="61"/>
        <end position="73"/>
    </location>
</feature>
<feature type="compositionally biased region" description="Acidic residues" evidence="3">
    <location>
        <begin position="87"/>
        <end position="96"/>
    </location>
</feature>
<feature type="active site" description="Nucleophile" evidence="1">
    <location>
        <position position="323"/>
    </location>
</feature>
<feature type="active site" description="Proton donor" evidence="1">
    <location>
        <position position="375"/>
    </location>
</feature>
<feature type="binding site" evidence="1">
    <location>
        <position position="243"/>
    </location>
    <ligand>
        <name>Ca(2+)</name>
        <dbReference type="ChEBI" id="CHEBI:29108"/>
    </ligand>
</feature>
<feature type="binding site" evidence="1">
    <location>
        <position position="284"/>
    </location>
    <ligand>
        <name>Ca(2+)</name>
        <dbReference type="ChEBI" id="CHEBI:29108"/>
    </ligand>
</feature>
<feature type="binding site" evidence="1">
    <location>
        <position position="293"/>
    </location>
    <ligand>
        <name>Ca(2+)</name>
        <dbReference type="ChEBI" id="CHEBI:29108"/>
    </ligand>
</feature>
<feature type="binding site" evidence="1">
    <location>
        <position position="327"/>
    </location>
    <ligand>
        <name>Ca(2+)</name>
        <dbReference type="ChEBI" id="CHEBI:29108"/>
    </ligand>
</feature>
<feature type="site" description="Transition state stabilizer" evidence="1">
    <location>
        <position position="447"/>
    </location>
</feature>
<gene>
    <name type="primary">amyA</name>
</gene>
<proteinExistence type="inferred from homology"/>
<organism>
    <name type="scientific">Butyrivibrio fibrisolvens</name>
    <dbReference type="NCBI Taxonomy" id="831"/>
    <lineage>
        <taxon>Bacteria</taxon>
        <taxon>Bacillati</taxon>
        <taxon>Bacillota</taxon>
        <taxon>Clostridia</taxon>
        <taxon>Lachnospirales</taxon>
        <taxon>Lachnospiraceae</taxon>
        <taxon>Butyrivibrio</taxon>
    </lineage>
</organism>
<sequence>MKRGKLWGRLVSAAGLSLSIFLSSIGNVSTAYAMESNDALVLDETKENTESATDASSNEASDAEADNDTDEAITDASSKELSAENDGASESDSSFDEYDHTALPETDEITVTAAGELSTAKAELYTLAPREAREADNSLVTRDSIHDGAILHAFCWSFNTIADNMADIADAGYTAVQTSPINECLSTNPGMNLHGPDGMWYYHYQPTDWVIGNYQLGSRDEFKHMCDVADEYGVAVIVDILPNHTTPSTGSIAKALMEAAGGSDALYHATGKIGGGYTDRLELTYYSMGGLPDVDTENTGFQQYFYEFLKDCVYLGADGFRIDTAKHISLPDDPVPSDYSDAGRNTFYPNMREALNEYSEEVGTKSYDELFVYGEVLQGTNDRLAAYQQYIGGTTASNYGSSLRSALSSGNLSVNRLLDYQIYDDTAYGSTYTADTEKLVTWVESHDNYMNDSESCWKSIDDDMVIMGWSIIAARDAGTPLFFSRPNNSSAENPYGDNLIGAAGSPIYKAPEVKAVNLFREKMGEADEYLSNPGGNIQTLMIERYNDTVQGAVIVNAAQTRTTISTETHLSDGIYPDQVEGSNSVFLVKDGVLSGSVEGEGVVVLSEKMDGTGKVVSFYNNKNWNGVVARVDNAEETLDTIDENDGWFQVTVLDDEFTIRFESADGKEVSPEFQITAESGTFATPDSSELYYSKAEAEEGLGIHTYPVYFFNTENWGSVYTYGWLDGGAQLFGGWPGTVAVNEGSGWYRADVKTTGEITAFNLIFNNGNGIQTVNVEGITPDSKDIYLAVDAEKSNGQLIVNRYEDKESAEKALGVSGSYTTAYFYNTEGWDKVCAYTWGATALGDWPGKELTQDEDGWYSVVLPAGPSEDLNIIFNNGNNGKQTNDMKISDMKYRFILNNGISYQKYGSKKDAMEAIAGAGDVTYETVYFYNEKADDANWKNVYLYVFGGTDGEYNNLVGTWPGKLMEKEEDSNG</sequence>
<evidence type="ECO:0000250" key="1"/>
<evidence type="ECO:0000255" key="2"/>
<evidence type="ECO:0000256" key="3">
    <source>
        <dbReference type="SAM" id="MobiDB-lite"/>
    </source>
</evidence>
<evidence type="ECO:0000305" key="4"/>
<keyword id="KW-0106">Calcium</keyword>
<keyword id="KW-0119">Carbohydrate metabolism</keyword>
<keyword id="KW-0326">Glycosidase</keyword>
<keyword id="KW-0378">Hydrolase</keyword>
<keyword id="KW-0479">Metal-binding</keyword>
<keyword id="KW-0732">Signal</keyword>
<comment type="catalytic activity">
    <reaction>
        <text>Endohydrolysis of (1-&gt;4)-alpha-D-glucosidic linkages in polysaccharides containing three or more (1-&gt;4)-alpha-linked D-glucose units.</text>
        <dbReference type="EC" id="3.2.1.1"/>
    </reaction>
</comment>
<comment type="cofactor">
    <cofactor evidence="1">
        <name>Ca(2+)</name>
        <dbReference type="ChEBI" id="CHEBI:29108"/>
    </cofactor>
    <text evidence="1">Binds 1 Ca(2+) ion per subunit.</text>
</comment>
<comment type="subunit">
    <text evidence="1">Monomer.</text>
</comment>
<comment type="similarity">
    <text evidence="4">Belongs to the glycosyl hydrolase 13 family.</text>
</comment>
<name>AMY_BUTFI</name>
<reference key="1">
    <citation type="journal article" date="1991" name="J. Bacteriol.">
        <title>Cloning, nucleotide sequence, and enzymatic characterization of an alpha-amylase from the ruminal bacterium Butyrivibrio fibrisolvens H17c.</title>
        <authorList>
            <person name="Rumbak E."/>
            <person name="Rawlings D.E."/>
            <person name="Lindsey G.G."/>
            <person name="Woods D.R."/>
        </authorList>
    </citation>
    <scope>NUCLEOTIDE SEQUENCE [GENOMIC DNA]</scope>
    <source>
        <strain>H17C</strain>
    </source>
</reference>